<organism>
    <name type="scientific">Mus musculus</name>
    <name type="common">Mouse</name>
    <dbReference type="NCBI Taxonomy" id="10090"/>
    <lineage>
        <taxon>Eukaryota</taxon>
        <taxon>Metazoa</taxon>
        <taxon>Chordata</taxon>
        <taxon>Craniata</taxon>
        <taxon>Vertebrata</taxon>
        <taxon>Euteleostomi</taxon>
        <taxon>Mammalia</taxon>
        <taxon>Eutheria</taxon>
        <taxon>Euarchontoglires</taxon>
        <taxon>Glires</taxon>
        <taxon>Rodentia</taxon>
        <taxon>Myomorpha</taxon>
        <taxon>Muroidea</taxon>
        <taxon>Muridae</taxon>
        <taxon>Murinae</taxon>
        <taxon>Mus</taxon>
        <taxon>Mus</taxon>
    </lineage>
</organism>
<comment type="function">
    <text evidence="2">Mitochondrial membrane protein that catalyzes the essential first step of biosynthesis of glycerolipids such as triglycerides, phosphatidic acids and lysophosphatidic acids (By similarity). Esterifies acyl-group from acyl-coenzyme A (acyl-CoA) to the sn-1 position of glycerol-3-phosphate, to produce lysophosphatidic acid (By similarity). Has a narrow hydrophobic binding cleft that selects for a linear acyl chain (By similarity). Catalytic activity is higher for substrates with a 16-carbon acyl chain (By similarity).</text>
</comment>
<comment type="catalytic activity">
    <reaction evidence="2">
        <text>sn-glycerol 3-phosphate + an acyl-CoA = a 1-acyl-sn-glycero-3-phosphate + CoA</text>
        <dbReference type="Rhea" id="RHEA:15325"/>
        <dbReference type="ChEBI" id="CHEBI:57287"/>
        <dbReference type="ChEBI" id="CHEBI:57597"/>
        <dbReference type="ChEBI" id="CHEBI:57970"/>
        <dbReference type="ChEBI" id="CHEBI:58342"/>
        <dbReference type="EC" id="2.3.1.15"/>
    </reaction>
    <physiologicalReaction direction="left-to-right" evidence="2">
        <dbReference type="Rhea" id="RHEA:15326"/>
    </physiologicalReaction>
</comment>
<comment type="catalytic activity">
    <reaction evidence="2">
        <text>(9Z,12Z)-octadecadienoyl-CoA + sn-glycerol 3-phosphate = 1-(9Z,12Z)-octadecadienoyl-sn-glycero-3-phosphate + CoA</text>
        <dbReference type="Rhea" id="RHEA:37203"/>
        <dbReference type="ChEBI" id="CHEBI:57287"/>
        <dbReference type="ChEBI" id="CHEBI:57383"/>
        <dbReference type="ChEBI" id="CHEBI:57597"/>
        <dbReference type="ChEBI" id="CHEBI:74547"/>
    </reaction>
    <physiologicalReaction direction="left-to-right" evidence="2">
        <dbReference type="Rhea" id="RHEA:37204"/>
    </physiologicalReaction>
</comment>
<comment type="catalytic activity">
    <reaction evidence="2">
        <text>sn-glycerol 3-phosphate + (9Z)-octadecenoyl-CoA = 1-(9Z-octadecenoyl)-sn-glycero-3-phosphate + CoA</text>
        <dbReference type="Rhea" id="RHEA:37199"/>
        <dbReference type="ChEBI" id="CHEBI:57287"/>
        <dbReference type="ChEBI" id="CHEBI:57387"/>
        <dbReference type="ChEBI" id="CHEBI:57597"/>
        <dbReference type="ChEBI" id="CHEBI:74544"/>
    </reaction>
    <physiologicalReaction direction="left-to-right" evidence="2">
        <dbReference type="Rhea" id="RHEA:37200"/>
    </physiologicalReaction>
</comment>
<comment type="catalytic activity">
    <reaction evidence="2">
        <text>sn-glycerol 3-phosphate + octadecanoyl-CoA = 1-octadecanoyl-sn-glycero-3-phosphate + CoA</text>
        <dbReference type="Rhea" id="RHEA:37195"/>
        <dbReference type="ChEBI" id="CHEBI:57287"/>
        <dbReference type="ChEBI" id="CHEBI:57394"/>
        <dbReference type="ChEBI" id="CHEBI:57597"/>
        <dbReference type="ChEBI" id="CHEBI:74565"/>
    </reaction>
    <physiologicalReaction direction="left-to-right" evidence="2">
        <dbReference type="Rhea" id="RHEA:37196"/>
    </physiologicalReaction>
</comment>
<comment type="catalytic activity">
    <reaction evidence="2">
        <text>sn-glycerol 3-phosphate + hexadecanoyl-CoA = 1-hexadecanoyl-sn-glycero-3-phosphate + CoA</text>
        <dbReference type="Rhea" id="RHEA:35723"/>
        <dbReference type="ChEBI" id="CHEBI:57287"/>
        <dbReference type="ChEBI" id="CHEBI:57379"/>
        <dbReference type="ChEBI" id="CHEBI:57518"/>
        <dbReference type="ChEBI" id="CHEBI:57597"/>
    </reaction>
    <physiologicalReaction direction="left-to-right" evidence="2">
        <dbReference type="Rhea" id="RHEA:35724"/>
    </physiologicalReaction>
</comment>
<comment type="catalytic activity">
    <reaction evidence="2">
        <text>dodecanoyl-CoA + sn-glycerol 3-phosphate = 1-dodecanoyl-sn-glycerol 3-phosphate + CoA</text>
        <dbReference type="Rhea" id="RHEA:35727"/>
        <dbReference type="ChEBI" id="CHEBI:57287"/>
        <dbReference type="ChEBI" id="CHEBI:57375"/>
        <dbReference type="ChEBI" id="CHEBI:57597"/>
        <dbReference type="ChEBI" id="CHEBI:72682"/>
    </reaction>
    <physiologicalReaction direction="left-to-right" evidence="2">
        <dbReference type="Rhea" id="RHEA:35728"/>
    </physiologicalReaction>
</comment>
<comment type="catalytic activity">
    <reaction evidence="2">
        <text>1-acyl-sn-glycero-3-phospho-(1'-sn-glycerol) + an acyl-CoA = a 1,2-diacyl-sn-glycero-3-phospho-(1'-sn-glycerol) + CoA</text>
        <dbReference type="Rhea" id="RHEA:33203"/>
        <dbReference type="ChEBI" id="CHEBI:57287"/>
        <dbReference type="ChEBI" id="CHEBI:58342"/>
        <dbReference type="ChEBI" id="CHEBI:64716"/>
        <dbReference type="ChEBI" id="CHEBI:64840"/>
    </reaction>
    <physiologicalReaction direction="left-to-right" evidence="2">
        <dbReference type="Rhea" id="RHEA:33204"/>
    </physiologicalReaction>
</comment>
<comment type="pathway">
    <text evidence="2">Phospholipid metabolism; CDP-diacylglycerol biosynthesis; CDP-diacylglycerol from sn-glycerol 3-phosphate: step 1/3.</text>
</comment>
<comment type="subcellular location">
    <subcellularLocation>
        <location evidence="2">Mitochondrion outer membrane</location>
        <topology evidence="2">Peripheral membrane protein</topology>
    </subcellularLocation>
    <text evidence="2">Associated with the mitochondrion outer membrane of hepatic cells via a patch of basic residues.</text>
</comment>
<comment type="tissue specificity">
    <text>Highest levels in liver, intermediate levels in muscle and kidney, and lowest levels in lung and brain.</text>
</comment>
<comment type="domain">
    <text evidence="2">The HXXXXD motif is essential for acyltransferase activity and contributes to the binding of the cysteamine moiety of the acyl-CoA and the phosphate moiety of the glycerol-3-phosphate.</text>
</comment>
<comment type="similarity">
    <text evidence="3">Belongs to the GPAT/DAPAT family.</text>
</comment>
<dbReference type="EC" id="2.3.1.15" evidence="2"/>
<dbReference type="EMBL" id="M77003">
    <property type="protein sequence ID" value="AAA37647.1"/>
    <property type="molecule type" value="mRNA"/>
</dbReference>
<dbReference type="EMBL" id="DQ479922">
    <property type="protein sequence ID" value="ABF48501.1"/>
    <property type="molecule type" value="Genomic_DNA"/>
</dbReference>
<dbReference type="EMBL" id="AK137067">
    <property type="protein sequence ID" value="BAE23226.1"/>
    <property type="molecule type" value="mRNA"/>
</dbReference>
<dbReference type="EMBL" id="CH466585">
    <property type="protein sequence ID" value="EDL01718.1"/>
    <property type="molecule type" value="Genomic_DNA"/>
</dbReference>
<dbReference type="EMBL" id="CH466585">
    <property type="protein sequence ID" value="EDL01719.1"/>
    <property type="molecule type" value="Genomic_DNA"/>
</dbReference>
<dbReference type="EMBL" id="BC019201">
    <property type="protein sequence ID" value="AAH19201.1"/>
    <property type="molecule type" value="mRNA"/>
</dbReference>
<dbReference type="CCDS" id="CCDS29906.1"/>
<dbReference type="PIR" id="A41672">
    <property type="entry name" value="A41672"/>
</dbReference>
<dbReference type="RefSeq" id="NP_001343214.1">
    <property type="nucleotide sequence ID" value="NM_001356285.2"/>
</dbReference>
<dbReference type="RefSeq" id="NP_001397383.1">
    <property type="nucleotide sequence ID" value="NM_001410454.1"/>
</dbReference>
<dbReference type="RefSeq" id="NP_032175.2">
    <property type="nucleotide sequence ID" value="NM_008149.3"/>
</dbReference>
<dbReference type="RefSeq" id="XP_006526755.1">
    <property type="nucleotide sequence ID" value="XM_006526692.5"/>
</dbReference>
<dbReference type="RefSeq" id="XP_006526756.1">
    <property type="nucleotide sequence ID" value="XM_006526693.3"/>
</dbReference>
<dbReference type="RefSeq" id="XP_006526757.1">
    <property type="nucleotide sequence ID" value="XM_006526694.1"/>
</dbReference>
<dbReference type="RefSeq" id="XP_011245449.1">
    <property type="nucleotide sequence ID" value="XM_011247147.1"/>
</dbReference>
<dbReference type="RefSeq" id="XP_036017330.1">
    <property type="nucleotide sequence ID" value="XM_036161437.1"/>
</dbReference>
<dbReference type="RefSeq" id="XP_036017331.1">
    <property type="nucleotide sequence ID" value="XM_036161438.1"/>
</dbReference>
<dbReference type="SMR" id="Q61586"/>
<dbReference type="BioGRID" id="200011">
    <property type="interactions" value="2"/>
</dbReference>
<dbReference type="FunCoup" id="Q61586">
    <property type="interactions" value="1443"/>
</dbReference>
<dbReference type="IntAct" id="Q61586">
    <property type="interactions" value="1"/>
</dbReference>
<dbReference type="MINT" id="Q61586"/>
<dbReference type="STRING" id="10090.ENSMUSP00000157722"/>
<dbReference type="BindingDB" id="Q61586"/>
<dbReference type="ChEMBL" id="CHEMBL3580525"/>
<dbReference type="GlyGen" id="Q61586">
    <property type="glycosylation" value="1 site, 1 O-linked glycan (1 site)"/>
</dbReference>
<dbReference type="iPTMnet" id="Q61586"/>
<dbReference type="PhosphoSitePlus" id="Q61586"/>
<dbReference type="SwissPalm" id="Q61586"/>
<dbReference type="jPOST" id="Q61586"/>
<dbReference type="PaxDb" id="10090-ENSMUSP00000057635"/>
<dbReference type="PeptideAtlas" id="Q61586"/>
<dbReference type="ProteomicsDB" id="271312"/>
<dbReference type="Pumba" id="Q61586"/>
<dbReference type="Antibodypedia" id="31772">
    <property type="antibodies" value="246 antibodies from 30 providers"/>
</dbReference>
<dbReference type="DNASU" id="14732"/>
<dbReference type="Ensembl" id="ENSMUST00000061856.6">
    <property type="protein sequence ID" value="ENSMUSP00000057635.6"/>
    <property type="gene ID" value="ENSMUSG00000024978.12"/>
</dbReference>
<dbReference type="Ensembl" id="ENSMUST00000235957.2">
    <property type="protein sequence ID" value="ENSMUSP00000157722.2"/>
    <property type="gene ID" value="ENSMUSG00000024978.12"/>
</dbReference>
<dbReference type="Ensembl" id="ENSMUST00000237146.2">
    <property type="protein sequence ID" value="ENSMUSP00000158322.2"/>
    <property type="gene ID" value="ENSMUSG00000024978.12"/>
</dbReference>
<dbReference type="GeneID" id="14732"/>
<dbReference type="KEGG" id="mmu:14732"/>
<dbReference type="UCSC" id="uc008hxk.1">
    <property type="organism name" value="mouse"/>
</dbReference>
<dbReference type="AGR" id="MGI:109162"/>
<dbReference type="CTD" id="57678"/>
<dbReference type="MGI" id="MGI:109162">
    <property type="gene designation" value="Gpam"/>
</dbReference>
<dbReference type="VEuPathDB" id="HostDB:ENSMUSG00000024978"/>
<dbReference type="eggNOG" id="KOG3729">
    <property type="taxonomic scope" value="Eukaryota"/>
</dbReference>
<dbReference type="GeneTree" id="ENSGT00520000055570"/>
<dbReference type="HOGENOM" id="CLU_016910_1_1_1"/>
<dbReference type="InParanoid" id="Q61586"/>
<dbReference type="OMA" id="RCKHTNE"/>
<dbReference type="OrthoDB" id="5962536at2759"/>
<dbReference type="PhylomeDB" id="Q61586"/>
<dbReference type="TreeFam" id="TF313360"/>
<dbReference type="BRENDA" id="2.3.1.15">
    <property type="organism ID" value="3474"/>
</dbReference>
<dbReference type="Reactome" id="R-MMU-1483166">
    <property type="pathway name" value="Synthesis of PA"/>
</dbReference>
<dbReference type="Reactome" id="R-MMU-75109">
    <property type="pathway name" value="Triglyceride biosynthesis"/>
</dbReference>
<dbReference type="SABIO-RK" id="Q61586"/>
<dbReference type="UniPathway" id="UPA00557">
    <property type="reaction ID" value="UER00612"/>
</dbReference>
<dbReference type="BioGRID-ORCS" id="14732">
    <property type="hits" value="2 hits in 62 CRISPR screens"/>
</dbReference>
<dbReference type="ChiTaRS" id="Gpam">
    <property type="organism name" value="mouse"/>
</dbReference>
<dbReference type="PRO" id="PR:Q61586"/>
<dbReference type="Proteomes" id="UP000000589">
    <property type="component" value="Chromosome 19"/>
</dbReference>
<dbReference type="RNAct" id="Q61586">
    <property type="molecule type" value="protein"/>
</dbReference>
<dbReference type="Bgee" id="ENSMUSG00000024978">
    <property type="expression patterns" value="Expressed in pigmented layer of retina and 273 other cell types or tissues"/>
</dbReference>
<dbReference type="ExpressionAtlas" id="Q61586">
    <property type="expression patterns" value="baseline and differential"/>
</dbReference>
<dbReference type="GO" id="GO:0005789">
    <property type="term" value="C:endoplasmic reticulum membrane"/>
    <property type="evidence" value="ECO:0000304"/>
    <property type="project" value="Reactome"/>
</dbReference>
<dbReference type="GO" id="GO:0005743">
    <property type="term" value="C:mitochondrial inner membrane"/>
    <property type="evidence" value="ECO:0007005"/>
    <property type="project" value="MGI"/>
</dbReference>
<dbReference type="GO" id="GO:0005741">
    <property type="term" value="C:mitochondrial outer membrane"/>
    <property type="evidence" value="ECO:0000315"/>
    <property type="project" value="MGI"/>
</dbReference>
<dbReference type="GO" id="GO:0005739">
    <property type="term" value="C:mitochondrion"/>
    <property type="evidence" value="ECO:0000314"/>
    <property type="project" value="MGI"/>
</dbReference>
<dbReference type="GO" id="GO:0005886">
    <property type="term" value="C:plasma membrane"/>
    <property type="evidence" value="ECO:0007669"/>
    <property type="project" value="InterPro"/>
</dbReference>
<dbReference type="GO" id="GO:0004366">
    <property type="term" value="F:glycerol-3-phosphate O-acyltransferase activity"/>
    <property type="evidence" value="ECO:0000314"/>
    <property type="project" value="MGI"/>
</dbReference>
<dbReference type="GO" id="GO:0050798">
    <property type="term" value="P:activated T cell proliferation"/>
    <property type="evidence" value="ECO:0000315"/>
    <property type="project" value="MGI"/>
</dbReference>
<dbReference type="GO" id="GO:0006924">
    <property type="term" value="P:activation-induced cell death of T cells"/>
    <property type="evidence" value="ECO:0000315"/>
    <property type="project" value="MGI"/>
</dbReference>
<dbReference type="GO" id="GO:0006637">
    <property type="term" value="P:acyl-CoA metabolic process"/>
    <property type="evidence" value="ECO:0000315"/>
    <property type="project" value="MGI"/>
</dbReference>
<dbReference type="GO" id="GO:0016024">
    <property type="term" value="P:CDP-diacylglycerol biosynthetic process"/>
    <property type="evidence" value="ECO:0007669"/>
    <property type="project" value="UniProtKB-UniPathway"/>
</dbReference>
<dbReference type="GO" id="GO:0051607">
    <property type="term" value="P:defense response to virus"/>
    <property type="evidence" value="ECO:0000315"/>
    <property type="project" value="MGI"/>
</dbReference>
<dbReference type="GO" id="GO:0006651">
    <property type="term" value="P:diacylglycerol biosynthetic process"/>
    <property type="evidence" value="ECO:0000250"/>
    <property type="project" value="UniProtKB"/>
</dbReference>
<dbReference type="GO" id="GO:0055089">
    <property type="term" value="P:fatty acid homeostasis"/>
    <property type="evidence" value="ECO:0000315"/>
    <property type="project" value="MGI"/>
</dbReference>
<dbReference type="GO" id="GO:0006631">
    <property type="term" value="P:fatty acid metabolic process"/>
    <property type="evidence" value="ECO:0000315"/>
    <property type="project" value="MGI"/>
</dbReference>
<dbReference type="GO" id="GO:0006650">
    <property type="term" value="P:glycerophospholipid metabolic process"/>
    <property type="evidence" value="ECO:0000315"/>
    <property type="project" value="MGI"/>
</dbReference>
<dbReference type="GO" id="GO:0070236">
    <property type="term" value="P:negative regulation of activation-induced cell death of T cells"/>
    <property type="evidence" value="ECO:0000315"/>
    <property type="project" value="MGI"/>
</dbReference>
<dbReference type="GO" id="GO:0006654">
    <property type="term" value="P:phosphatidic acid biosynthetic process"/>
    <property type="evidence" value="ECO:0000250"/>
    <property type="project" value="UniProtKB"/>
</dbReference>
<dbReference type="GO" id="GO:0006655">
    <property type="term" value="P:phosphatidylglycerol biosynthetic process"/>
    <property type="evidence" value="ECO:0000250"/>
    <property type="project" value="UniProtKB"/>
</dbReference>
<dbReference type="GO" id="GO:0055091">
    <property type="term" value="P:phospholipid homeostasis"/>
    <property type="evidence" value="ECO:0000315"/>
    <property type="project" value="MGI"/>
</dbReference>
<dbReference type="GO" id="GO:0042104">
    <property type="term" value="P:positive regulation of activated T cell proliferation"/>
    <property type="evidence" value="ECO:0000315"/>
    <property type="project" value="MGI"/>
</dbReference>
<dbReference type="GO" id="GO:0040018">
    <property type="term" value="P:positive regulation of multicellular organism growth"/>
    <property type="evidence" value="ECO:0000315"/>
    <property type="project" value="MGI"/>
</dbReference>
<dbReference type="GO" id="GO:0001817">
    <property type="term" value="P:regulation of cytokine production"/>
    <property type="evidence" value="ECO:0000315"/>
    <property type="project" value="MGI"/>
</dbReference>
<dbReference type="GO" id="GO:0009749">
    <property type="term" value="P:response to glucose"/>
    <property type="evidence" value="ECO:0000315"/>
    <property type="project" value="MGI"/>
</dbReference>
<dbReference type="GO" id="GO:0019432">
    <property type="term" value="P:triglyceride biosynthetic process"/>
    <property type="evidence" value="ECO:0000315"/>
    <property type="project" value="MGI"/>
</dbReference>
<dbReference type="GO" id="GO:0006641">
    <property type="term" value="P:triglyceride metabolic process"/>
    <property type="evidence" value="ECO:0000315"/>
    <property type="project" value="MGI"/>
</dbReference>
<dbReference type="CDD" id="cd07993">
    <property type="entry name" value="LPLAT_DHAPAT-like"/>
    <property type="match status" value="1"/>
</dbReference>
<dbReference type="InterPro" id="IPR022284">
    <property type="entry name" value="GPAT/DHAPAT"/>
</dbReference>
<dbReference type="InterPro" id="IPR045520">
    <property type="entry name" value="GPAT/DHAPAT_C"/>
</dbReference>
<dbReference type="InterPro" id="IPR041728">
    <property type="entry name" value="GPAT/DHAPAT_LPLAT"/>
</dbReference>
<dbReference type="InterPro" id="IPR028354">
    <property type="entry name" value="GPAT_PlsB"/>
</dbReference>
<dbReference type="InterPro" id="IPR002123">
    <property type="entry name" value="Plipid/glycerol_acylTrfase"/>
</dbReference>
<dbReference type="PANTHER" id="PTHR12563">
    <property type="entry name" value="GLYCEROL-3-PHOSPHATE ACYLTRANSFERASE"/>
    <property type="match status" value="1"/>
</dbReference>
<dbReference type="PANTHER" id="PTHR12563:SF16">
    <property type="entry name" value="GLYCEROL-3-PHOSPHATE ACYLTRANSFERASE 1, MITOCHONDRIAL"/>
    <property type="match status" value="1"/>
</dbReference>
<dbReference type="Pfam" id="PF01553">
    <property type="entry name" value="Acyltransferase"/>
    <property type="match status" value="1"/>
</dbReference>
<dbReference type="Pfam" id="PF19277">
    <property type="entry name" value="GPAT_C"/>
    <property type="match status" value="1"/>
</dbReference>
<dbReference type="PIRSF" id="PIRSF500064">
    <property type="entry name" value="GPAT"/>
    <property type="match status" value="1"/>
</dbReference>
<dbReference type="PIRSF" id="PIRSF000437">
    <property type="entry name" value="GPAT_DHAPAT"/>
    <property type="match status" value="1"/>
</dbReference>
<dbReference type="SMART" id="SM00563">
    <property type="entry name" value="PlsC"/>
    <property type="match status" value="1"/>
</dbReference>
<dbReference type="SUPFAM" id="SSF69593">
    <property type="entry name" value="Glycerol-3-phosphate (1)-acyltransferase"/>
    <property type="match status" value="1"/>
</dbReference>
<protein>
    <recommendedName>
        <fullName evidence="3">Glycerol-3-phosphate acyltransferase 1, mitochondrial</fullName>
        <shortName evidence="2">GPAT-1</shortName>
        <ecNumber evidence="2">2.3.1.15</ecNumber>
    </recommendedName>
    <alternativeName>
        <fullName>P90</fullName>
    </alternativeName>
</protein>
<feature type="chain" id="PRO_0000024691" description="Glycerol-3-phosphate acyltransferase 1, mitochondrial">
    <location>
        <begin position="1"/>
        <end position="827"/>
    </location>
</feature>
<feature type="topological domain" description="Cytoplasmic" evidence="2">
    <location>
        <begin position="1"/>
        <end position="87"/>
    </location>
</feature>
<feature type="intramembrane region" evidence="2">
    <location>
        <begin position="88"/>
        <end position="118"/>
    </location>
</feature>
<feature type="topological domain" description="Cytoplasmic" evidence="2">
    <location>
        <begin position="119"/>
        <end position="827"/>
    </location>
</feature>
<feature type="region of interest" description="Important for mitochondrial localization" evidence="2">
    <location>
        <begin position="80"/>
        <end position="120"/>
    </location>
</feature>
<feature type="short sequence motif" description="HXXXXD motif" evidence="2">
    <location>
        <begin position="230"/>
        <end position="235"/>
    </location>
</feature>
<feature type="binding site" evidence="2">
    <location>
        <position position="278"/>
    </location>
    <ligand>
        <name>CoA</name>
        <dbReference type="ChEBI" id="CHEBI:57287"/>
    </ligand>
</feature>
<feature type="binding site" evidence="2">
    <location>
        <position position="279"/>
    </location>
    <ligand>
        <name>CoA</name>
        <dbReference type="ChEBI" id="CHEBI:57287"/>
    </ligand>
</feature>
<feature type="binding site" evidence="2">
    <location>
        <position position="288"/>
    </location>
    <ligand>
        <name>CoA</name>
        <dbReference type="ChEBI" id="CHEBI:57287"/>
    </ligand>
</feature>
<feature type="binding site" evidence="2">
    <location>
        <position position="293"/>
    </location>
    <ligand>
        <name>CoA</name>
        <dbReference type="ChEBI" id="CHEBI:57287"/>
    </ligand>
</feature>
<feature type="binding site" evidence="2">
    <location>
        <position position="328"/>
    </location>
    <ligand>
        <name>CoA</name>
        <dbReference type="ChEBI" id="CHEBI:57287"/>
    </ligand>
</feature>
<feature type="binding site" evidence="2">
    <location>
        <position position="462"/>
    </location>
    <ligand>
        <name>CoA</name>
        <dbReference type="ChEBI" id="CHEBI:57287"/>
    </ligand>
</feature>
<feature type="modified residue" description="Phosphoserine" evidence="1">
    <location>
        <position position="380"/>
    </location>
</feature>
<feature type="modified residue" description="Phosphoserine" evidence="6 8">
    <location>
        <position position="687"/>
    </location>
</feature>
<feature type="modified residue" description="Phosphoserine" evidence="5 6 7 8">
    <location>
        <position position="694"/>
    </location>
</feature>
<feature type="modified residue" description="N6-acetyllysine" evidence="9">
    <location>
        <position position="779"/>
    </location>
</feature>
<feature type="modified residue" description="N6-acetyllysine" evidence="9">
    <location>
        <position position="783"/>
    </location>
</feature>
<feature type="sequence conflict" description="In Ref. 1; AAA37647." evidence="3" ref="1">
    <original>L</original>
    <variation>V</variation>
    <location>
        <position position="331"/>
    </location>
</feature>
<feature type="sequence conflict" description="In Ref. 1; AAA37647." evidence="3" ref="1">
    <original>D</original>
    <variation>N</variation>
    <location>
        <position position="337"/>
    </location>
</feature>
<gene>
    <name evidence="4" type="primary">Gpam</name>
    <name evidence="2" type="synonym">Gpat1</name>
</gene>
<proteinExistence type="evidence at protein level"/>
<accession>Q61586</accession>
<accession>Q8VCT2</accession>
<sequence length="827" mass="93705">MEESSVTVGTIDVSYLPSSSEYSLGRCKHTSEDWVDCGFKPTFFRSATLKWKESLMSRKRPFVGRCCYSCTPQSWERFFNPSIPSLGLRNVIYINETHTRHRGWLARRLSYILFVQERDVHKGMFATSVTENVLSSSRVQEAIAEVAAELNPDGSAQQQSKAIQKVKRKARKILQEMVATVSPGMIRLTGWVLLKLFNSFFWNIQIHKGQLEMVKAATETNLPLLFLPVHRSHIDYLLLTFILFCHNIKAPYIASGNNLNIPVFSTLIHKLGGFFIRRRLDETPDGRKDILYRALLHGHVVELLRQQQFLEIFLEGTRSRSGKTSCARAGLLSVVVDTLSSNTIPDILVIPVGISYDRIIEGHYNGEQLGKPKKNESLWSVARGVIRMLRKNYGYVRVDFAQPFSLKEYLEGQSQKPVSAPLSLEQALLPAILPSRPNDVADEHQDLSSNESRNPADEAFRRRLIANLAEHILFTASKSCAIMSTHIVACLLLYRHRQGIHLSTLVEDFFVMKEEVLARDFDLGFSGNSEDVVMHAIQLLGNCVTITHTSRKDEFFITPSTTVPSVFELNFYSNGVLHVFIMEAIIACSIYAVLNKRCSGGSAGGLGNLISQEQLVRKAASLCYLLSNEGTISLPCQTFYQVCHETVGKFIQYGILTVAEQDDQEDVSPGLAEQQWDKKLPELNWRSDEEDEDSDFGEEQRDCYLKVSQSKEHQQFITFLQRLLGPLLEAYSSAAIFVHNFSGPVPESEYLQKLHRYLITRTERNVAVYAESATYCLVKNAVKMFKDIGVFKETKQKRVSVLELSSTFLPQCNRQKLLEYILSFVVL</sequence>
<reference key="1">
    <citation type="journal article" date="1991" name="J. Biol. Chem.">
        <title>Transcriptional regulation of p90 with sequence homology to Escherichia coli glycerol-3-phosphate acyltransferase.</title>
        <authorList>
            <person name="Shin D.-H."/>
            <person name="Paulauskis J.D."/>
            <person name="Moustaid N."/>
            <person name="Sul H.S."/>
        </authorList>
    </citation>
    <scope>NUCLEOTIDE SEQUENCE [MRNA]</scope>
    <source>
        <tissue>Liver</tissue>
    </source>
</reference>
<reference key="2">
    <citation type="journal article" date="2006" name="Nat. Genet.">
        <title>Positional cloning of Sorcs1, a type 2 diabetes quantitative trait locus.</title>
        <authorList>
            <person name="Clee S.M."/>
            <person name="Yandell B.S."/>
            <person name="Schueler K.M."/>
            <person name="Rabaglia M.E."/>
            <person name="Richards O.C."/>
            <person name="Raines S.M."/>
            <person name="Kabara E.A."/>
            <person name="Klass D.M."/>
            <person name="Mui E.T.-K."/>
            <person name="Stapleton D.S."/>
            <person name="Gray-Keller M.P."/>
            <person name="Young M.B."/>
            <person name="Stoehr J.P."/>
            <person name="Lan H."/>
            <person name="Boronenkov I."/>
            <person name="Raess P.W."/>
            <person name="Flowers M.T."/>
            <person name="Attie A.D."/>
        </authorList>
    </citation>
    <scope>NUCLEOTIDE SEQUENCE [GENOMIC DNA]</scope>
    <source>
        <strain>BTBR T+ tf/J</strain>
    </source>
</reference>
<reference key="3">
    <citation type="journal article" date="2005" name="Science">
        <title>The transcriptional landscape of the mammalian genome.</title>
        <authorList>
            <person name="Carninci P."/>
            <person name="Kasukawa T."/>
            <person name="Katayama S."/>
            <person name="Gough J."/>
            <person name="Frith M.C."/>
            <person name="Maeda N."/>
            <person name="Oyama R."/>
            <person name="Ravasi T."/>
            <person name="Lenhard B."/>
            <person name="Wells C."/>
            <person name="Kodzius R."/>
            <person name="Shimokawa K."/>
            <person name="Bajic V.B."/>
            <person name="Brenner S.E."/>
            <person name="Batalov S."/>
            <person name="Forrest A.R."/>
            <person name="Zavolan M."/>
            <person name="Davis M.J."/>
            <person name="Wilming L.G."/>
            <person name="Aidinis V."/>
            <person name="Allen J.E."/>
            <person name="Ambesi-Impiombato A."/>
            <person name="Apweiler R."/>
            <person name="Aturaliya R.N."/>
            <person name="Bailey T.L."/>
            <person name="Bansal M."/>
            <person name="Baxter L."/>
            <person name="Beisel K.W."/>
            <person name="Bersano T."/>
            <person name="Bono H."/>
            <person name="Chalk A.M."/>
            <person name="Chiu K.P."/>
            <person name="Choudhary V."/>
            <person name="Christoffels A."/>
            <person name="Clutterbuck D.R."/>
            <person name="Crowe M.L."/>
            <person name="Dalla E."/>
            <person name="Dalrymple B.P."/>
            <person name="de Bono B."/>
            <person name="Della Gatta G."/>
            <person name="di Bernardo D."/>
            <person name="Down T."/>
            <person name="Engstrom P."/>
            <person name="Fagiolini M."/>
            <person name="Faulkner G."/>
            <person name="Fletcher C.F."/>
            <person name="Fukushima T."/>
            <person name="Furuno M."/>
            <person name="Futaki S."/>
            <person name="Gariboldi M."/>
            <person name="Georgii-Hemming P."/>
            <person name="Gingeras T.R."/>
            <person name="Gojobori T."/>
            <person name="Green R.E."/>
            <person name="Gustincich S."/>
            <person name="Harbers M."/>
            <person name="Hayashi Y."/>
            <person name="Hensch T.K."/>
            <person name="Hirokawa N."/>
            <person name="Hill D."/>
            <person name="Huminiecki L."/>
            <person name="Iacono M."/>
            <person name="Ikeo K."/>
            <person name="Iwama A."/>
            <person name="Ishikawa T."/>
            <person name="Jakt M."/>
            <person name="Kanapin A."/>
            <person name="Katoh M."/>
            <person name="Kawasawa Y."/>
            <person name="Kelso J."/>
            <person name="Kitamura H."/>
            <person name="Kitano H."/>
            <person name="Kollias G."/>
            <person name="Krishnan S.P."/>
            <person name="Kruger A."/>
            <person name="Kummerfeld S.K."/>
            <person name="Kurochkin I.V."/>
            <person name="Lareau L.F."/>
            <person name="Lazarevic D."/>
            <person name="Lipovich L."/>
            <person name="Liu J."/>
            <person name="Liuni S."/>
            <person name="McWilliam S."/>
            <person name="Madan Babu M."/>
            <person name="Madera M."/>
            <person name="Marchionni L."/>
            <person name="Matsuda H."/>
            <person name="Matsuzawa S."/>
            <person name="Miki H."/>
            <person name="Mignone F."/>
            <person name="Miyake S."/>
            <person name="Morris K."/>
            <person name="Mottagui-Tabar S."/>
            <person name="Mulder N."/>
            <person name="Nakano N."/>
            <person name="Nakauchi H."/>
            <person name="Ng P."/>
            <person name="Nilsson R."/>
            <person name="Nishiguchi S."/>
            <person name="Nishikawa S."/>
            <person name="Nori F."/>
            <person name="Ohara O."/>
            <person name="Okazaki Y."/>
            <person name="Orlando V."/>
            <person name="Pang K.C."/>
            <person name="Pavan W.J."/>
            <person name="Pavesi G."/>
            <person name="Pesole G."/>
            <person name="Petrovsky N."/>
            <person name="Piazza S."/>
            <person name="Reed J."/>
            <person name="Reid J.F."/>
            <person name="Ring B.Z."/>
            <person name="Ringwald M."/>
            <person name="Rost B."/>
            <person name="Ruan Y."/>
            <person name="Salzberg S.L."/>
            <person name="Sandelin A."/>
            <person name="Schneider C."/>
            <person name="Schoenbach C."/>
            <person name="Sekiguchi K."/>
            <person name="Semple C.A."/>
            <person name="Seno S."/>
            <person name="Sessa L."/>
            <person name="Sheng Y."/>
            <person name="Shibata Y."/>
            <person name="Shimada H."/>
            <person name="Shimada K."/>
            <person name="Silva D."/>
            <person name="Sinclair B."/>
            <person name="Sperling S."/>
            <person name="Stupka E."/>
            <person name="Sugiura K."/>
            <person name="Sultana R."/>
            <person name="Takenaka Y."/>
            <person name="Taki K."/>
            <person name="Tammoja K."/>
            <person name="Tan S.L."/>
            <person name="Tang S."/>
            <person name="Taylor M.S."/>
            <person name="Tegner J."/>
            <person name="Teichmann S.A."/>
            <person name="Ueda H.R."/>
            <person name="van Nimwegen E."/>
            <person name="Verardo R."/>
            <person name="Wei C.L."/>
            <person name="Yagi K."/>
            <person name="Yamanishi H."/>
            <person name="Zabarovsky E."/>
            <person name="Zhu S."/>
            <person name="Zimmer A."/>
            <person name="Hide W."/>
            <person name="Bult C."/>
            <person name="Grimmond S.M."/>
            <person name="Teasdale R.D."/>
            <person name="Liu E.T."/>
            <person name="Brusic V."/>
            <person name="Quackenbush J."/>
            <person name="Wahlestedt C."/>
            <person name="Mattick J.S."/>
            <person name="Hume D.A."/>
            <person name="Kai C."/>
            <person name="Sasaki D."/>
            <person name="Tomaru Y."/>
            <person name="Fukuda S."/>
            <person name="Kanamori-Katayama M."/>
            <person name="Suzuki M."/>
            <person name="Aoki J."/>
            <person name="Arakawa T."/>
            <person name="Iida J."/>
            <person name="Imamura K."/>
            <person name="Itoh M."/>
            <person name="Kato T."/>
            <person name="Kawaji H."/>
            <person name="Kawagashira N."/>
            <person name="Kawashima T."/>
            <person name="Kojima M."/>
            <person name="Kondo S."/>
            <person name="Konno H."/>
            <person name="Nakano K."/>
            <person name="Ninomiya N."/>
            <person name="Nishio T."/>
            <person name="Okada M."/>
            <person name="Plessy C."/>
            <person name="Shibata K."/>
            <person name="Shiraki T."/>
            <person name="Suzuki S."/>
            <person name="Tagami M."/>
            <person name="Waki K."/>
            <person name="Watahiki A."/>
            <person name="Okamura-Oho Y."/>
            <person name="Suzuki H."/>
            <person name="Kawai J."/>
            <person name="Hayashizaki Y."/>
        </authorList>
    </citation>
    <scope>NUCLEOTIDE SEQUENCE [LARGE SCALE MRNA]</scope>
    <source>
        <strain>C57BL/6J</strain>
        <tissue>Embryo</tissue>
    </source>
</reference>
<reference key="4">
    <citation type="submission" date="2005-07" db="EMBL/GenBank/DDBJ databases">
        <authorList>
            <person name="Mural R.J."/>
            <person name="Adams M.D."/>
            <person name="Myers E.W."/>
            <person name="Smith H.O."/>
            <person name="Venter J.C."/>
        </authorList>
    </citation>
    <scope>NUCLEOTIDE SEQUENCE [LARGE SCALE GENOMIC DNA]</scope>
</reference>
<reference key="5">
    <citation type="journal article" date="2004" name="Genome Res.">
        <title>The status, quality, and expansion of the NIH full-length cDNA project: the Mammalian Gene Collection (MGC).</title>
        <authorList>
            <consortium name="The MGC Project Team"/>
        </authorList>
    </citation>
    <scope>NUCLEOTIDE SEQUENCE [LARGE SCALE MRNA]</scope>
    <source>
        <strain>FVB/N</strain>
        <tissue>Kidney</tissue>
    </source>
</reference>
<reference key="6">
    <citation type="journal article" date="2007" name="Mol. Cell. Proteomics">
        <title>Mitochondrial phosphoproteome revealed by an improved IMAC method and MS/MS/MS.</title>
        <authorList>
            <person name="Lee J."/>
            <person name="Xu Y."/>
            <person name="Chen Y."/>
            <person name="Sprung R."/>
            <person name="Kim S.C."/>
            <person name="Xie S."/>
            <person name="Zhao Y."/>
        </authorList>
    </citation>
    <scope>PHOSPHORYLATION [LARGE SCALE ANALYSIS] AT SER-694</scope>
    <scope>IDENTIFICATION BY MASS SPECTROMETRY [LARGE SCALE ANALYSIS]</scope>
    <source>
        <tissue>Liver</tissue>
    </source>
</reference>
<reference key="7">
    <citation type="journal article" date="2007" name="Proc. Natl. Acad. Sci. U.S.A.">
        <title>Large-scale phosphorylation analysis of mouse liver.</title>
        <authorList>
            <person name="Villen J."/>
            <person name="Beausoleil S.A."/>
            <person name="Gerber S.A."/>
            <person name="Gygi S.P."/>
        </authorList>
    </citation>
    <scope>PHOSPHORYLATION [LARGE SCALE ANALYSIS] AT SER-687 AND SER-694</scope>
    <scope>IDENTIFICATION BY MASS SPECTROMETRY [LARGE SCALE ANALYSIS]</scope>
    <source>
        <tissue>Liver</tissue>
    </source>
</reference>
<reference key="8">
    <citation type="journal article" date="2008" name="J. Proteome Res.">
        <title>Specific phosphopeptide enrichment with immobilized titanium ion affinity chromatography adsorbent for phosphoproteome analysis.</title>
        <authorList>
            <person name="Zhou H."/>
            <person name="Ye M."/>
            <person name="Dong J."/>
            <person name="Han G."/>
            <person name="Jiang X."/>
            <person name="Wu R."/>
            <person name="Zou H."/>
        </authorList>
    </citation>
    <scope>PHOSPHORYLATION [LARGE SCALE ANALYSIS] AT SER-694</scope>
    <scope>IDENTIFICATION BY MASS SPECTROMETRY [LARGE SCALE ANALYSIS]</scope>
    <source>
        <tissue>Liver</tissue>
    </source>
</reference>
<reference key="9">
    <citation type="journal article" date="2010" name="Cell">
        <title>A tissue-specific atlas of mouse protein phosphorylation and expression.</title>
        <authorList>
            <person name="Huttlin E.L."/>
            <person name="Jedrychowski M.P."/>
            <person name="Elias J.E."/>
            <person name="Goswami T."/>
            <person name="Rad R."/>
            <person name="Beausoleil S.A."/>
            <person name="Villen J."/>
            <person name="Haas W."/>
            <person name="Sowa M.E."/>
            <person name="Gygi S.P."/>
        </authorList>
    </citation>
    <scope>PHOSPHORYLATION [LARGE SCALE ANALYSIS] AT SER-687 AND SER-694</scope>
    <scope>IDENTIFICATION BY MASS SPECTROMETRY [LARGE SCALE ANALYSIS]</scope>
    <source>
        <tissue>Brain</tissue>
        <tissue>Brown adipose tissue</tissue>
        <tissue>Heart</tissue>
        <tissue>Kidney</tissue>
        <tissue>Liver</tissue>
        <tissue>Lung</tissue>
        <tissue>Spleen</tissue>
        <tissue>Testis</tissue>
    </source>
</reference>
<reference key="10">
    <citation type="journal article" date="2013" name="Proc. Natl. Acad. Sci. U.S.A.">
        <title>Label-free quantitative proteomics of the lysine acetylome in mitochondria identifies substrates of SIRT3 in metabolic pathways.</title>
        <authorList>
            <person name="Rardin M.J."/>
            <person name="Newman J.C."/>
            <person name="Held J.M."/>
            <person name="Cusack M.P."/>
            <person name="Sorensen D.J."/>
            <person name="Li B."/>
            <person name="Schilling B."/>
            <person name="Mooney S.D."/>
            <person name="Kahn C.R."/>
            <person name="Verdin E."/>
            <person name="Gibson B.W."/>
        </authorList>
    </citation>
    <scope>ACETYLATION [LARGE SCALE ANALYSIS] AT LYS-779 AND LYS-783</scope>
    <scope>IDENTIFICATION BY MASS SPECTROMETRY [LARGE SCALE ANALYSIS]</scope>
    <source>
        <tissue>Liver</tissue>
    </source>
</reference>
<evidence type="ECO:0000250" key="1">
    <source>
        <dbReference type="UniProtKB" id="P97564"/>
    </source>
</evidence>
<evidence type="ECO:0000250" key="2">
    <source>
        <dbReference type="UniProtKB" id="Q9HCL2"/>
    </source>
</evidence>
<evidence type="ECO:0000305" key="3"/>
<evidence type="ECO:0000312" key="4">
    <source>
        <dbReference type="MGI" id="MGI:109162"/>
    </source>
</evidence>
<evidence type="ECO:0007744" key="5">
    <source>
    </source>
</evidence>
<evidence type="ECO:0007744" key="6">
    <source>
    </source>
</evidence>
<evidence type="ECO:0007744" key="7">
    <source>
    </source>
</evidence>
<evidence type="ECO:0007744" key="8">
    <source>
    </source>
</evidence>
<evidence type="ECO:0007744" key="9">
    <source>
    </source>
</evidence>
<name>GPAT1_MOUSE</name>
<keyword id="KW-0007">Acetylation</keyword>
<keyword id="KW-0012">Acyltransferase</keyword>
<keyword id="KW-0444">Lipid biosynthesis</keyword>
<keyword id="KW-0443">Lipid metabolism</keyword>
<keyword id="KW-0472">Membrane</keyword>
<keyword id="KW-0496">Mitochondrion</keyword>
<keyword id="KW-1000">Mitochondrion outer membrane</keyword>
<keyword id="KW-0594">Phospholipid biosynthesis</keyword>
<keyword id="KW-1208">Phospholipid metabolism</keyword>
<keyword id="KW-0597">Phosphoprotein</keyword>
<keyword id="KW-1185">Reference proteome</keyword>
<keyword id="KW-0808">Transferase</keyword>